<comment type="function">
    <text evidence="1">Catalyzes the conversion of N-formimidoyl-L-glutamate to L-glutamate and formamide.</text>
</comment>
<comment type="catalytic activity">
    <reaction evidence="1">
        <text>N-formimidoyl-L-glutamate + H2O = formamide + L-glutamate</text>
        <dbReference type="Rhea" id="RHEA:22492"/>
        <dbReference type="ChEBI" id="CHEBI:15377"/>
        <dbReference type="ChEBI" id="CHEBI:16397"/>
        <dbReference type="ChEBI" id="CHEBI:29985"/>
        <dbReference type="ChEBI" id="CHEBI:58928"/>
        <dbReference type="EC" id="3.5.3.8"/>
    </reaction>
</comment>
<comment type="cofactor">
    <cofactor evidence="1">
        <name>Mn(2+)</name>
        <dbReference type="ChEBI" id="CHEBI:29035"/>
    </cofactor>
    <text evidence="1">Binds 2 manganese ions per subunit.</text>
</comment>
<comment type="pathway">
    <text evidence="1">Amino-acid degradation; L-histidine degradation into L-glutamate; L-glutamate from N-formimidoyl-L-glutamate (hydrolase route): step 1/1.</text>
</comment>
<comment type="similarity">
    <text evidence="1">Belongs to the arginase family.</text>
</comment>
<protein>
    <recommendedName>
        <fullName evidence="1">Formimidoylglutamase</fullName>
        <ecNumber evidence="1">3.5.3.8</ecNumber>
    </recommendedName>
    <alternativeName>
        <fullName evidence="1">Formiminoglutamase</fullName>
    </alternativeName>
    <alternativeName>
        <fullName evidence="1">Formiminoglutamate hydrolase</fullName>
    </alternativeName>
</protein>
<organism>
    <name type="scientific">Halobacterium salinarum (strain ATCC 29341 / DSM 671 / R1)</name>
    <dbReference type="NCBI Taxonomy" id="478009"/>
    <lineage>
        <taxon>Archaea</taxon>
        <taxon>Methanobacteriati</taxon>
        <taxon>Methanobacteriota</taxon>
        <taxon>Stenosarchaea group</taxon>
        <taxon>Halobacteria</taxon>
        <taxon>Halobacteriales</taxon>
        <taxon>Halobacteriaceae</taxon>
        <taxon>Halobacterium</taxon>
        <taxon>Halobacterium salinarum NRC-34001</taxon>
    </lineage>
</organism>
<dbReference type="EC" id="3.5.3.8" evidence="1"/>
<dbReference type="EMBL" id="AM774415">
    <property type="protein sequence ID" value="CAP13857.1"/>
    <property type="molecule type" value="Genomic_DNA"/>
</dbReference>
<dbReference type="RefSeq" id="WP_010902874.1">
    <property type="nucleotide sequence ID" value="NC_010364.1"/>
</dbReference>
<dbReference type="SMR" id="B0R542"/>
<dbReference type="EnsemblBacteria" id="CAP13857">
    <property type="protein sequence ID" value="CAP13857"/>
    <property type="gene ID" value="OE_2736F"/>
</dbReference>
<dbReference type="GeneID" id="89349557"/>
<dbReference type="KEGG" id="hsl:OE_2736F"/>
<dbReference type="HOGENOM" id="CLU_039478_0_2_2"/>
<dbReference type="PhylomeDB" id="B0R542"/>
<dbReference type="UniPathway" id="UPA00379">
    <property type="reaction ID" value="UER00552"/>
</dbReference>
<dbReference type="Proteomes" id="UP000001321">
    <property type="component" value="Chromosome"/>
</dbReference>
<dbReference type="GO" id="GO:0008783">
    <property type="term" value="F:agmatinase activity"/>
    <property type="evidence" value="ECO:0007669"/>
    <property type="project" value="TreeGrafter"/>
</dbReference>
<dbReference type="GO" id="GO:0050415">
    <property type="term" value="F:formimidoylglutamase activity"/>
    <property type="evidence" value="ECO:0007669"/>
    <property type="project" value="UniProtKB-UniRule"/>
</dbReference>
<dbReference type="GO" id="GO:0030145">
    <property type="term" value="F:manganese ion binding"/>
    <property type="evidence" value="ECO:0007669"/>
    <property type="project" value="UniProtKB-UniRule"/>
</dbReference>
<dbReference type="GO" id="GO:0019556">
    <property type="term" value="P:L-histidine catabolic process to glutamate and formamide"/>
    <property type="evidence" value="ECO:0007669"/>
    <property type="project" value="UniProtKB-UniPathway"/>
</dbReference>
<dbReference type="GO" id="GO:0019557">
    <property type="term" value="P:L-histidine catabolic process to glutamate and formate"/>
    <property type="evidence" value="ECO:0007669"/>
    <property type="project" value="UniProtKB-UniPathway"/>
</dbReference>
<dbReference type="GO" id="GO:0033389">
    <property type="term" value="P:putrescine biosynthetic process from arginine, via agmatine"/>
    <property type="evidence" value="ECO:0007669"/>
    <property type="project" value="TreeGrafter"/>
</dbReference>
<dbReference type="CDD" id="cd09990">
    <property type="entry name" value="Agmatinase-like"/>
    <property type="match status" value="1"/>
</dbReference>
<dbReference type="Gene3D" id="3.40.800.10">
    <property type="entry name" value="Ureohydrolase domain"/>
    <property type="match status" value="1"/>
</dbReference>
<dbReference type="HAMAP" id="MF_00737">
    <property type="entry name" value="Formimidoylglutam"/>
    <property type="match status" value="1"/>
</dbReference>
<dbReference type="InterPro" id="IPR005923">
    <property type="entry name" value="HutG"/>
</dbReference>
<dbReference type="InterPro" id="IPR006035">
    <property type="entry name" value="Ureohydrolase"/>
</dbReference>
<dbReference type="InterPro" id="IPR023696">
    <property type="entry name" value="Ureohydrolase_dom_sf"/>
</dbReference>
<dbReference type="NCBIfam" id="TIGR01227">
    <property type="entry name" value="hutG"/>
    <property type="match status" value="1"/>
</dbReference>
<dbReference type="PANTHER" id="PTHR11358">
    <property type="entry name" value="ARGINASE/AGMATINASE"/>
    <property type="match status" value="1"/>
</dbReference>
<dbReference type="PANTHER" id="PTHR11358:SF26">
    <property type="entry name" value="GUANIDINO ACID HYDROLASE, MITOCHONDRIAL"/>
    <property type="match status" value="1"/>
</dbReference>
<dbReference type="Pfam" id="PF00491">
    <property type="entry name" value="Arginase"/>
    <property type="match status" value="1"/>
</dbReference>
<dbReference type="PIRSF" id="PIRSF036979">
    <property type="entry name" value="Arginase"/>
    <property type="match status" value="1"/>
</dbReference>
<dbReference type="SUPFAM" id="SSF52768">
    <property type="entry name" value="Arginase/deacetylase"/>
    <property type="match status" value="1"/>
</dbReference>
<dbReference type="PROSITE" id="PS51409">
    <property type="entry name" value="ARGINASE_2"/>
    <property type="match status" value="1"/>
</dbReference>
<reference key="1">
    <citation type="journal article" date="2008" name="Genomics">
        <title>Evolution in the laboratory: the genome of Halobacterium salinarum strain R1 compared to that of strain NRC-1.</title>
        <authorList>
            <person name="Pfeiffer F."/>
            <person name="Schuster S.C."/>
            <person name="Broicher A."/>
            <person name="Falb M."/>
            <person name="Palm P."/>
            <person name="Rodewald K."/>
            <person name="Ruepp A."/>
            <person name="Soppa J."/>
            <person name="Tittor J."/>
            <person name="Oesterhelt D."/>
        </authorList>
    </citation>
    <scope>NUCLEOTIDE SEQUENCE [LARGE SCALE GENOMIC DNA]</scope>
    <source>
        <strain>ATCC 29341 / DSM 671 / R1</strain>
    </source>
</reference>
<feature type="chain" id="PRO_1000133001" description="Formimidoylglutamase">
    <location>
        <begin position="1"/>
        <end position="306"/>
    </location>
</feature>
<feature type="region of interest" description="Disordered" evidence="2">
    <location>
        <begin position="1"/>
        <end position="36"/>
    </location>
</feature>
<feature type="compositionally biased region" description="Polar residues" evidence="2">
    <location>
        <begin position="1"/>
        <end position="13"/>
    </location>
</feature>
<feature type="binding site" evidence="1">
    <location>
        <position position="123"/>
    </location>
    <ligand>
        <name>Mn(2+)</name>
        <dbReference type="ChEBI" id="CHEBI:29035"/>
        <label>1</label>
    </ligand>
</feature>
<feature type="binding site" evidence="1">
    <location>
        <position position="147"/>
    </location>
    <ligand>
        <name>Mn(2+)</name>
        <dbReference type="ChEBI" id="CHEBI:29035"/>
        <label>1</label>
    </ligand>
</feature>
<feature type="binding site" evidence="1">
    <location>
        <position position="147"/>
    </location>
    <ligand>
        <name>Mn(2+)</name>
        <dbReference type="ChEBI" id="CHEBI:29035"/>
        <label>2</label>
    </ligand>
</feature>
<feature type="binding site" evidence="1">
    <location>
        <position position="149"/>
    </location>
    <ligand>
        <name>Mn(2+)</name>
        <dbReference type="ChEBI" id="CHEBI:29035"/>
        <label>2</label>
    </ligand>
</feature>
<feature type="binding site" evidence="1">
    <location>
        <position position="151"/>
    </location>
    <ligand>
        <name>Mn(2+)</name>
        <dbReference type="ChEBI" id="CHEBI:29035"/>
        <label>1</label>
    </ligand>
</feature>
<feature type="binding site" evidence="1">
    <location>
        <position position="234"/>
    </location>
    <ligand>
        <name>Mn(2+)</name>
        <dbReference type="ChEBI" id="CHEBI:29035"/>
        <label>1</label>
    </ligand>
</feature>
<feature type="binding site" evidence="1">
    <location>
        <position position="234"/>
    </location>
    <ligand>
        <name>Mn(2+)</name>
        <dbReference type="ChEBI" id="CHEBI:29035"/>
        <label>2</label>
    </ligand>
</feature>
<feature type="binding site" evidence="1">
    <location>
        <position position="236"/>
    </location>
    <ligand>
        <name>Mn(2+)</name>
        <dbReference type="ChEBI" id="CHEBI:29035"/>
        <label>2</label>
    </ligand>
</feature>
<name>HUTG_HALS3</name>
<evidence type="ECO:0000255" key="1">
    <source>
        <dbReference type="HAMAP-Rule" id="MF_00737"/>
    </source>
</evidence>
<evidence type="ECO:0000256" key="2">
    <source>
        <dbReference type="SAM" id="MobiDB-lite"/>
    </source>
</evidence>
<keyword id="KW-0369">Histidine metabolism</keyword>
<keyword id="KW-0378">Hydrolase</keyword>
<keyword id="KW-0464">Manganese</keyword>
<keyword id="KW-0479">Metal-binding</keyword>
<gene>
    <name evidence="1" type="primary">hutG</name>
    <name type="ordered locus">OE_2736F</name>
</gene>
<accession>B0R542</accession>
<proteinExistence type="inferred from homology"/>
<sequence length="306" mass="31422">MFQNATDWTPTSTDPRDEQFGGVVEPVPTPSDADDYDAVLVGEPYDGAVIGRRGARDGPSAIRESLAGVKTHHFDAGAVSGVADLGDVVLPDGDVADTQAAVREAAAEVHETAALPVFVGGDNSLSYANVAPLVAADNGAVGVVSVDAHLDCRAVGDRGPTSGTPYRQLFDAGLDALAVVGARHFETTTTYAGFLRDQGGRIVTSDAVAADRDGSLDAAREALDGVDHVYVSVDIDVLDAAYPGASAPTPGGIQPRELFALVEALAASDDRIRGFELVETAPTLDTGGRTVDAAARTIAHFLAGAQ</sequence>